<dbReference type="EC" id="2.1.1.199" evidence="1"/>
<dbReference type="EMBL" id="CP000812">
    <property type="protein sequence ID" value="ABV33992.1"/>
    <property type="molecule type" value="Genomic_DNA"/>
</dbReference>
<dbReference type="SMR" id="A8F758"/>
<dbReference type="STRING" id="416591.Tlet_1436"/>
<dbReference type="KEGG" id="tle:Tlet_1436"/>
<dbReference type="eggNOG" id="COG0275">
    <property type="taxonomic scope" value="Bacteria"/>
</dbReference>
<dbReference type="HOGENOM" id="CLU_038422_3_0_0"/>
<dbReference type="OrthoDB" id="9806637at2"/>
<dbReference type="Proteomes" id="UP000002016">
    <property type="component" value="Chromosome"/>
</dbReference>
<dbReference type="GO" id="GO:0005737">
    <property type="term" value="C:cytoplasm"/>
    <property type="evidence" value="ECO:0007669"/>
    <property type="project" value="UniProtKB-SubCell"/>
</dbReference>
<dbReference type="GO" id="GO:0071424">
    <property type="term" value="F:rRNA (cytosine-N4-)-methyltransferase activity"/>
    <property type="evidence" value="ECO:0007669"/>
    <property type="project" value="UniProtKB-UniRule"/>
</dbReference>
<dbReference type="GO" id="GO:0070475">
    <property type="term" value="P:rRNA base methylation"/>
    <property type="evidence" value="ECO:0007669"/>
    <property type="project" value="UniProtKB-UniRule"/>
</dbReference>
<dbReference type="Gene3D" id="1.10.150.170">
    <property type="entry name" value="Putative methyltransferase TM0872, insert domain"/>
    <property type="match status" value="1"/>
</dbReference>
<dbReference type="Gene3D" id="3.40.50.150">
    <property type="entry name" value="Vaccinia Virus protein VP39"/>
    <property type="match status" value="1"/>
</dbReference>
<dbReference type="HAMAP" id="MF_01007">
    <property type="entry name" value="16SrRNA_methyltr_H"/>
    <property type="match status" value="1"/>
</dbReference>
<dbReference type="InterPro" id="IPR002903">
    <property type="entry name" value="RsmH"/>
</dbReference>
<dbReference type="InterPro" id="IPR023397">
    <property type="entry name" value="SAM-dep_MeTrfase_MraW_recog"/>
</dbReference>
<dbReference type="InterPro" id="IPR029063">
    <property type="entry name" value="SAM-dependent_MTases_sf"/>
</dbReference>
<dbReference type="NCBIfam" id="TIGR00006">
    <property type="entry name" value="16S rRNA (cytosine(1402)-N(4))-methyltransferase RsmH"/>
    <property type="match status" value="1"/>
</dbReference>
<dbReference type="PANTHER" id="PTHR11265:SF0">
    <property type="entry name" value="12S RRNA N4-METHYLCYTIDINE METHYLTRANSFERASE"/>
    <property type="match status" value="1"/>
</dbReference>
<dbReference type="PANTHER" id="PTHR11265">
    <property type="entry name" value="S-ADENOSYL-METHYLTRANSFERASE MRAW"/>
    <property type="match status" value="1"/>
</dbReference>
<dbReference type="Pfam" id="PF01795">
    <property type="entry name" value="Methyltransf_5"/>
    <property type="match status" value="1"/>
</dbReference>
<dbReference type="PIRSF" id="PIRSF004486">
    <property type="entry name" value="MraW"/>
    <property type="match status" value="1"/>
</dbReference>
<dbReference type="SUPFAM" id="SSF81799">
    <property type="entry name" value="Putative methyltransferase TM0872, insert domain"/>
    <property type="match status" value="1"/>
</dbReference>
<dbReference type="SUPFAM" id="SSF53335">
    <property type="entry name" value="S-adenosyl-L-methionine-dependent methyltransferases"/>
    <property type="match status" value="1"/>
</dbReference>
<keyword id="KW-0963">Cytoplasm</keyword>
<keyword id="KW-0489">Methyltransferase</keyword>
<keyword id="KW-1185">Reference proteome</keyword>
<keyword id="KW-0698">rRNA processing</keyword>
<keyword id="KW-0949">S-adenosyl-L-methionine</keyword>
<keyword id="KW-0808">Transferase</keyword>
<reference key="1">
    <citation type="submission" date="2007-08" db="EMBL/GenBank/DDBJ databases">
        <title>Complete sequence of Thermotoga lettingae TMO.</title>
        <authorList>
            <consortium name="US DOE Joint Genome Institute"/>
            <person name="Copeland A."/>
            <person name="Lucas S."/>
            <person name="Lapidus A."/>
            <person name="Barry K."/>
            <person name="Glavina del Rio T."/>
            <person name="Dalin E."/>
            <person name="Tice H."/>
            <person name="Pitluck S."/>
            <person name="Foster B."/>
            <person name="Bruce D."/>
            <person name="Schmutz J."/>
            <person name="Larimer F."/>
            <person name="Land M."/>
            <person name="Hauser L."/>
            <person name="Kyrpides N."/>
            <person name="Mikhailova N."/>
            <person name="Nelson K."/>
            <person name="Gogarten J.P."/>
            <person name="Noll K."/>
            <person name="Richardson P."/>
        </authorList>
    </citation>
    <scope>NUCLEOTIDE SEQUENCE [LARGE SCALE GENOMIC DNA]</scope>
    <source>
        <strain>ATCC BAA-301 / DSM 14385 / NBRC 107922 / TMO</strain>
    </source>
</reference>
<accession>A8F758</accession>
<name>RSMH_PSELT</name>
<gene>
    <name evidence="1" type="primary">rsmH</name>
    <name type="synonym">mraW</name>
    <name type="ordered locus">Tlet_1436</name>
</gene>
<proteinExistence type="inferred from homology"/>
<evidence type="ECO:0000255" key="1">
    <source>
        <dbReference type="HAMAP-Rule" id="MF_01007"/>
    </source>
</evidence>
<protein>
    <recommendedName>
        <fullName evidence="1">Ribosomal RNA small subunit methyltransferase H</fullName>
        <ecNumber evidence="1">2.1.1.199</ecNumber>
    </recommendedName>
    <alternativeName>
        <fullName evidence="1">16S rRNA m(4)C1402 methyltransferase</fullName>
    </alternativeName>
    <alternativeName>
        <fullName evidence="1">rRNA (cytosine-N(4)-)-methyltransferase RsmH</fullName>
    </alternativeName>
</protein>
<comment type="function">
    <text evidence="1">Specifically methylates the N4 position of cytidine in position 1402 (C1402) of 16S rRNA.</text>
</comment>
<comment type="catalytic activity">
    <reaction evidence="1">
        <text>cytidine(1402) in 16S rRNA + S-adenosyl-L-methionine = N(4)-methylcytidine(1402) in 16S rRNA + S-adenosyl-L-homocysteine + H(+)</text>
        <dbReference type="Rhea" id="RHEA:42928"/>
        <dbReference type="Rhea" id="RHEA-COMP:10286"/>
        <dbReference type="Rhea" id="RHEA-COMP:10287"/>
        <dbReference type="ChEBI" id="CHEBI:15378"/>
        <dbReference type="ChEBI" id="CHEBI:57856"/>
        <dbReference type="ChEBI" id="CHEBI:59789"/>
        <dbReference type="ChEBI" id="CHEBI:74506"/>
        <dbReference type="ChEBI" id="CHEBI:82748"/>
        <dbReference type="EC" id="2.1.1.199"/>
    </reaction>
</comment>
<comment type="subcellular location">
    <subcellularLocation>
        <location evidence="1">Cytoplasm</location>
    </subcellularLocation>
</comment>
<comment type="similarity">
    <text evidence="1">Belongs to the methyltransferase superfamily. RsmH family.</text>
</comment>
<feature type="chain" id="PRO_0000387193" description="Ribosomal RNA small subunit methyltransferase H">
    <location>
        <begin position="1"/>
        <end position="292"/>
    </location>
</feature>
<feature type="binding site" evidence="1">
    <location>
        <begin position="32"/>
        <end position="34"/>
    </location>
    <ligand>
        <name>S-adenosyl-L-methionine</name>
        <dbReference type="ChEBI" id="CHEBI:59789"/>
    </ligand>
</feature>
<feature type="binding site" evidence="1">
    <location>
        <position position="51"/>
    </location>
    <ligand>
        <name>S-adenosyl-L-methionine</name>
        <dbReference type="ChEBI" id="CHEBI:59789"/>
    </ligand>
</feature>
<feature type="binding site" evidence="1">
    <location>
        <position position="87"/>
    </location>
    <ligand>
        <name>S-adenosyl-L-methionine</name>
        <dbReference type="ChEBI" id="CHEBI:59789"/>
    </ligand>
</feature>
<feature type="binding site" evidence="1">
    <location>
        <position position="101"/>
    </location>
    <ligand>
        <name>S-adenosyl-L-methionine</name>
        <dbReference type="ChEBI" id="CHEBI:59789"/>
    </ligand>
</feature>
<feature type="binding site" evidence="1">
    <location>
        <position position="108"/>
    </location>
    <ligand>
        <name>S-adenosyl-L-methionine</name>
        <dbReference type="ChEBI" id="CHEBI:59789"/>
    </ligand>
</feature>
<sequence length="292" mass="33540">MEIVHVPVMVKEVLSYFSNLRGVFLDCTVGAGGHSEAILENIKGSVVIGIDVDEEILSVAKQRLKKYESEGRAKLLKATYVEAQRVLSQLGVKAVNGIIMDLGVSTLQLMKGERGFAFSSDGPLDMRMDKTQRLTAYDIVNFWQENQLRRIFFEYGEEKRYAGRIARFIVKNRPVETTAKLVEVIARALPEKERRFRRRHFATRVFQAIRIAVNNELENLRNFLVQVPDILNQNGRIIVISFHSLEDRIVKEAFRSIQELDVLTRKPVRPSLEEVRENPKARSAKMRIAERK</sequence>
<organism>
    <name type="scientific">Pseudothermotoga lettingae (strain ATCC BAA-301 / DSM 14385 / NBRC 107922 / TMO)</name>
    <name type="common">Thermotoga lettingae</name>
    <dbReference type="NCBI Taxonomy" id="416591"/>
    <lineage>
        <taxon>Bacteria</taxon>
        <taxon>Thermotogati</taxon>
        <taxon>Thermotogota</taxon>
        <taxon>Thermotogae</taxon>
        <taxon>Thermotogales</taxon>
        <taxon>Thermotogaceae</taxon>
        <taxon>Pseudothermotoga</taxon>
    </lineage>
</organism>